<gene>
    <name evidence="2" type="primary">ispE</name>
    <name type="ordered locus">MLBr00242</name>
</gene>
<keyword id="KW-0067">ATP-binding</keyword>
<keyword id="KW-0414">Isoprene biosynthesis</keyword>
<keyword id="KW-0418">Kinase</keyword>
<keyword id="KW-0547">Nucleotide-binding</keyword>
<keyword id="KW-0808">Transferase</keyword>
<feature type="chain" id="PRO_1000190694" description="4-diphosphocytidyl-2-C-methyl-D-erythritol kinase">
    <location>
        <begin position="1"/>
        <end position="323"/>
    </location>
</feature>
<feature type="active site" evidence="2">
    <location>
        <position position="25"/>
    </location>
</feature>
<feature type="active site" evidence="2">
    <location>
        <position position="152"/>
    </location>
</feature>
<feature type="binding site" evidence="2">
    <location>
        <begin position="110"/>
        <end position="120"/>
    </location>
    <ligand>
        <name>ATP</name>
        <dbReference type="ChEBI" id="CHEBI:30616"/>
    </ligand>
</feature>
<dbReference type="EC" id="2.7.1.148" evidence="2"/>
<dbReference type="EMBL" id="FM211192">
    <property type="protein sequence ID" value="CAR70335.1"/>
    <property type="status" value="ALT_INIT"/>
    <property type="molecule type" value="Genomic_DNA"/>
</dbReference>
<dbReference type="SMR" id="B8ZU60"/>
<dbReference type="KEGG" id="mlb:MLBr00242"/>
<dbReference type="HOGENOM" id="CLU_053057_1_1_11"/>
<dbReference type="UniPathway" id="UPA00056">
    <property type="reaction ID" value="UER00094"/>
</dbReference>
<dbReference type="Proteomes" id="UP000006900">
    <property type="component" value="Chromosome"/>
</dbReference>
<dbReference type="GO" id="GO:0050515">
    <property type="term" value="F:4-(cytidine 5'-diphospho)-2-C-methyl-D-erythritol kinase activity"/>
    <property type="evidence" value="ECO:0007669"/>
    <property type="project" value="UniProtKB-UniRule"/>
</dbReference>
<dbReference type="GO" id="GO:0005524">
    <property type="term" value="F:ATP binding"/>
    <property type="evidence" value="ECO:0007669"/>
    <property type="project" value="UniProtKB-UniRule"/>
</dbReference>
<dbReference type="GO" id="GO:0019288">
    <property type="term" value="P:isopentenyl diphosphate biosynthetic process, methylerythritol 4-phosphate pathway"/>
    <property type="evidence" value="ECO:0007669"/>
    <property type="project" value="UniProtKB-UniRule"/>
</dbReference>
<dbReference type="GO" id="GO:0016114">
    <property type="term" value="P:terpenoid biosynthetic process"/>
    <property type="evidence" value="ECO:0007669"/>
    <property type="project" value="InterPro"/>
</dbReference>
<dbReference type="FunFam" id="3.30.70.890:FF:000013">
    <property type="entry name" value="4-diphosphocytidyl-2-C-methyl-D-erythritol kinase"/>
    <property type="match status" value="1"/>
</dbReference>
<dbReference type="Gene3D" id="3.30.230.10">
    <property type="match status" value="1"/>
</dbReference>
<dbReference type="Gene3D" id="3.30.70.890">
    <property type="entry name" value="GHMP kinase, C-terminal domain"/>
    <property type="match status" value="1"/>
</dbReference>
<dbReference type="HAMAP" id="MF_00061">
    <property type="entry name" value="IspE"/>
    <property type="match status" value="1"/>
</dbReference>
<dbReference type="InterPro" id="IPR013750">
    <property type="entry name" value="GHMP_kinase_C_dom"/>
</dbReference>
<dbReference type="InterPro" id="IPR036554">
    <property type="entry name" value="GHMP_kinase_C_sf"/>
</dbReference>
<dbReference type="InterPro" id="IPR006204">
    <property type="entry name" value="GHMP_kinase_N_dom"/>
</dbReference>
<dbReference type="InterPro" id="IPR004424">
    <property type="entry name" value="IspE"/>
</dbReference>
<dbReference type="InterPro" id="IPR020568">
    <property type="entry name" value="Ribosomal_Su5_D2-typ_SF"/>
</dbReference>
<dbReference type="InterPro" id="IPR014721">
    <property type="entry name" value="Ribsml_uS5_D2-typ_fold_subgr"/>
</dbReference>
<dbReference type="NCBIfam" id="TIGR00154">
    <property type="entry name" value="ispE"/>
    <property type="match status" value="1"/>
</dbReference>
<dbReference type="NCBIfam" id="NF002870">
    <property type="entry name" value="PRK03188.1"/>
    <property type="match status" value="1"/>
</dbReference>
<dbReference type="PANTHER" id="PTHR43527">
    <property type="entry name" value="4-DIPHOSPHOCYTIDYL-2-C-METHYL-D-ERYTHRITOL KINASE, CHLOROPLASTIC"/>
    <property type="match status" value="1"/>
</dbReference>
<dbReference type="PANTHER" id="PTHR43527:SF2">
    <property type="entry name" value="4-DIPHOSPHOCYTIDYL-2-C-METHYL-D-ERYTHRITOL KINASE, CHLOROPLASTIC"/>
    <property type="match status" value="1"/>
</dbReference>
<dbReference type="Pfam" id="PF08544">
    <property type="entry name" value="GHMP_kinases_C"/>
    <property type="match status" value="1"/>
</dbReference>
<dbReference type="Pfam" id="PF00288">
    <property type="entry name" value="GHMP_kinases_N"/>
    <property type="match status" value="1"/>
</dbReference>
<dbReference type="PIRSF" id="PIRSF010376">
    <property type="entry name" value="IspE"/>
    <property type="match status" value="1"/>
</dbReference>
<dbReference type="SUPFAM" id="SSF55060">
    <property type="entry name" value="GHMP Kinase, C-terminal domain"/>
    <property type="match status" value="1"/>
</dbReference>
<dbReference type="SUPFAM" id="SSF54211">
    <property type="entry name" value="Ribosomal protein S5 domain 2-like"/>
    <property type="match status" value="1"/>
</dbReference>
<organism>
    <name type="scientific">Mycobacterium leprae (strain Br4923)</name>
    <dbReference type="NCBI Taxonomy" id="561304"/>
    <lineage>
        <taxon>Bacteria</taxon>
        <taxon>Bacillati</taxon>
        <taxon>Actinomycetota</taxon>
        <taxon>Actinomycetes</taxon>
        <taxon>Mycobacteriales</taxon>
        <taxon>Mycobacteriaceae</taxon>
        <taxon>Mycobacterium</taxon>
    </lineage>
</organism>
<evidence type="ECO:0000250" key="1">
    <source>
        <dbReference type="UniProtKB" id="P9WKG7"/>
    </source>
</evidence>
<evidence type="ECO:0000255" key="2">
    <source>
        <dbReference type="HAMAP-Rule" id="MF_00061"/>
    </source>
</evidence>
<protein>
    <recommendedName>
        <fullName evidence="2">4-diphosphocytidyl-2-C-methyl-D-erythritol kinase</fullName>
        <shortName evidence="2">CMK</shortName>
        <ecNumber evidence="2">2.7.1.148</ecNumber>
    </recommendedName>
    <alternativeName>
        <fullName evidence="2">4-(cytidine-5'-diphospho)-2-C-methyl-D-erythritol kinase</fullName>
    </alternativeName>
</protein>
<sequence>MFASDGNAATQWMPTGSVTVQVPGKINLYLAVGDCCDNGYHELVTVFHAVSLVDQVTVRNADVLSLGLVGEGANHVPTDEHNIAWRAAELMAEHVGRAPDVSIMIDKSIPVAGGMAGGSADAAAVLVAMNSLWELSLPRRDLCMLAAKLGSDVPFALHGGTALGTGRGEELATVLSRATFHWVLAFADSSLLTPAVYTEFDRLRDVGNPPRLAEPGPVLAALVAADPEQLAPLLGNELQAAAVSLDPALRCALRAGMEAGALAGIVSGSGPTCAFLCASATSAIDVGAQLAGAGVCRTVRVATGPVPGARVVHAPMSRGLNDM</sequence>
<accession>B8ZU60</accession>
<proteinExistence type="inferred from homology"/>
<comment type="function">
    <text evidence="2">Catalyzes the phosphorylation of the position 2 hydroxy group of 4-diphosphocytidyl-2C-methyl-D-erythritol.</text>
</comment>
<comment type="catalytic activity">
    <reaction evidence="2">
        <text>4-CDP-2-C-methyl-D-erythritol + ATP = 4-CDP-2-C-methyl-D-erythritol 2-phosphate + ADP + H(+)</text>
        <dbReference type="Rhea" id="RHEA:18437"/>
        <dbReference type="ChEBI" id="CHEBI:15378"/>
        <dbReference type="ChEBI" id="CHEBI:30616"/>
        <dbReference type="ChEBI" id="CHEBI:57823"/>
        <dbReference type="ChEBI" id="CHEBI:57919"/>
        <dbReference type="ChEBI" id="CHEBI:456216"/>
        <dbReference type="EC" id="2.7.1.148"/>
    </reaction>
</comment>
<comment type="pathway">
    <text evidence="2">Isoprenoid biosynthesis; isopentenyl diphosphate biosynthesis via DXP pathway; isopentenyl diphosphate from 1-deoxy-D-xylulose 5-phosphate: step 3/6.</text>
</comment>
<comment type="similarity">
    <text evidence="2">Belongs to the GHMP kinase family. IspE subfamily.</text>
</comment>
<comment type="sequence caution" evidence="1">
    <conflict type="erroneous initiation">
        <sequence resource="EMBL-CDS" id="CAR70335"/>
    </conflict>
    <text>Truncated N-terminus.</text>
</comment>
<reference key="1">
    <citation type="journal article" date="2009" name="Nat. Genet.">
        <title>Comparative genomic and phylogeographic analysis of Mycobacterium leprae.</title>
        <authorList>
            <person name="Monot M."/>
            <person name="Honore N."/>
            <person name="Garnier T."/>
            <person name="Zidane N."/>
            <person name="Sherafi D."/>
            <person name="Paniz-Mondolfi A."/>
            <person name="Matsuoka M."/>
            <person name="Taylor G.M."/>
            <person name="Donoghue H.D."/>
            <person name="Bouwman A."/>
            <person name="Mays S."/>
            <person name="Watson C."/>
            <person name="Lockwood D."/>
            <person name="Khamispour A."/>
            <person name="Dowlati Y."/>
            <person name="Jianping S."/>
            <person name="Rea T.H."/>
            <person name="Vera-Cabrera L."/>
            <person name="Stefani M.M."/>
            <person name="Banu S."/>
            <person name="Macdonald M."/>
            <person name="Sapkota B.R."/>
            <person name="Spencer J.S."/>
            <person name="Thomas J."/>
            <person name="Harshman K."/>
            <person name="Singh P."/>
            <person name="Busso P."/>
            <person name="Gattiker A."/>
            <person name="Rougemont J."/>
            <person name="Brennan P.J."/>
            <person name="Cole S.T."/>
        </authorList>
    </citation>
    <scope>NUCLEOTIDE SEQUENCE [LARGE SCALE GENOMIC DNA]</scope>
    <source>
        <strain>Br4923</strain>
    </source>
</reference>
<name>ISPE_MYCLB</name>